<gene>
    <name type="primary">MIF</name>
</gene>
<sequence length="115" mass="12451">MPMFVVNTNVPRASVPDGFLSELTQQLVQAMGKPAQYIAVHVVPDQLMAFGGSSEPCALCSLHSIGKIGGAQNRSYSKLLCGLLAERLRISPDRIYINYYDMNAANVGWNGSTFA</sequence>
<evidence type="ECO:0000250" key="1">
    <source>
        <dbReference type="UniProtKB" id="P14174"/>
    </source>
</evidence>
<evidence type="ECO:0000250" key="2">
    <source>
        <dbReference type="UniProtKB" id="P34884"/>
    </source>
</evidence>
<evidence type="ECO:0000269" key="3">
    <source ref="3"/>
</evidence>
<evidence type="ECO:0000305" key="4"/>
<dbReference type="EC" id="5.3.2.1" evidence="1"/>
<dbReference type="EC" id="5.3.3.12" evidence="1"/>
<dbReference type="EMBL" id="DQ989235">
    <property type="protein sequence ID" value="ABI95381.1"/>
    <property type="molecule type" value="mRNA"/>
</dbReference>
<dbReference type="EMBL" id="AF176246">
    <property type="protein sequence ID" value="AAD50507.1"/>
    <property type="molecule type" value="mRNA"/>
</dbReference>
<dbReference type="PIR" id="PC4367">
    <property type="entry name" value="PC4367"/>
</dbReference>
<dbReference type="RefSeq" id="NP_001070681.1">
    <property type="nucleotide sequence ID" value="NM_001077213.2"/>
</dbReference>
<dbReference type="SMR" id="P80928"/>
<dbReference type="FunCoup" id="P80928">
    <property type="interactions" value="521"/>
</dbReference>
<dbReference type="STRING" id="9823.ENSSSCP00000010740"/>
<dbReference type="PaxDb" id="9823-ENSSSCP00000010740"/>
<dbReference type="PeptideAtlas" id="P80928"/>
<dbReference type="Ensembl" id="ENSSSCT00000011028.5">
    <property type="protein sequence ID" value="ENSSSCP00000010740.2"/>
    <property type="gene ID" value="ENSSSCG00000010067.5"/>
</dbReference>
<dbReference type="Ensembl" id="ENSSSCT00015025282.1">
    <property type="protein sequence ID" value="ENSSSCP00015009861.1"/>
    <property type="gene ID" value="ENSSSCG00015019001.1"/>
</dbReference>
<dbReference type="Ensembl" id="ENSSSCT00025070452.1">
    <property type="protein sequence ID" value="ENSSSCP00025030420.1"/>
    <property type="gene ID" value="ENSSSCG00025051477.1"/>
</dbReference>
<dbReference type="Ensembl" id="ENSSSCT00030104869.1">
    <property type="protein sequence ID" value="ENSSSCP00030048693.1"/>
    <property type="gene ID" value="ENSSSCG00030074639.1"/>
</dbReference>
<dbReference type="Ensembl" id="ENSSSCT00040082936.1">
    <property type="protein sequence ID" value="ENSSSCP00040036125.1"/>
    <property type="gene ID" value="ENSSSCG00040060827.1"/>
</dbReference>
<dbReference type="Ensembl" id="ENSSSCT00045024045.1">
    <property type="protein sequence ID" value="ENSSSCP00045016589.1"/>
    <property type="gene ID" value="ENSSSCG00045014084.1"/>
</dbReference>
<dbReference type="Ensembl" id="ENSSSCT00050027816.1">
    <property type="protein sequence ID" value="ENSSSCP00050011494.1"/>
    <property type="gene ID" value="ENSSSCG00050020575.1"/>
</dbReference>
<dbReference type="Ensembl" id="ENSSSCT00060055120.1">
    <property type="protein sequence ID" value="ENSSSCP00060023538.1"/>
    <property type="gene ID" value="ENSSSCG00060040668.1"/>
</dbReference>
<dbReference type="Ensembl" id="ENSSSCT00065023557.1">
    <property type="protein sequence ID" value="ENSSSCP00065009591.1"/>
    <property type="gene ID" value="ENSSSCG00065017715.1"/>
</dbReference>
<dbReference type="Ensembl" id="ENSSSCT00085039871">
    <property type="protein sequence ID" value="ENSSSCP00085027725"/>
    <property type="gene ID" value="ENSSSCG00085021005"/>
</dbReference>
<dbReference type="Ensembl" id="ENSSSCT00105055865">
    <property type="protein sequence ID" value="ENSSSCP00105039418"/>
    <property type="gene ID" value="ENSSSCG00105029333"/>
</dbReference>
<dbReference type="Ensembl" id="ENSSSCT00110038342">
    <property type="protein sequence ID" value="ENSSSCP00110026432"/>
    <property type="gene ID" value="ENSSSCG00110019974"/>
</dbReference>
<dbReference type="Ensembl" id="ENSSSCT00115032625">
    <property type="protein sequence ID" value="ENSSSCP00115030998"/>
    <property type="gene ID" value="ENSSSCG00115018426"/>
</dbReference>
<dbReference type="GeneID" id="397412"/>
<dbReference type="KEGG" id="ssc:397412"/>
<dbReference type="CTD" id="4282"/>
<dbReference type="VGNC" id="VGNC:90222">
    <property type="gene designation" value="MIF"/>
</dbReference>
<dbReference type="eggNOG" id="KOG1759">
    <property type="taxonomic scope" value="Eukaryota"/>
</dbReference>
<dbReference type="GeneTree" id="ENSGT00940000155608"/>
<dbReference type="HOGENOM" id="CLU_129906_1_1_1"/>
<dbReference type="InParanoid" id="P80928"/>
<dbReference type="OMA" id="YINFFDM"/>
<dbReference type="OrthoDB" id="255819at2759"/>
<dbReference type="TreeFam" id="TF313853"/>
<dbReference type="Reactome" id="R-SSC-202733">
    <property type="pathway name" value="Cell surface interactions at the vascular wall"/>
</dbReference>
<dbReference type="Reactome" id="R-SSC-6798695">
    <property type="pathway name" value="Neutrophil degranulation"/>
</dbReference>
<dbReference type="Proteomes" id="UP000008227">
    <property type="component" value="Chromosome 14"/>
</dbReference>
<dbReference type="Proteomes" id="UP000314985">
    <property type="component" value="Unplaced"/>
</dbReference>
<dbReference type="Proteomes" id="UP000694570">
    <property type="component" value="Unplaced"/>
</dbReference>
<dbReference type="Proteomes" id="UP000694571">
    <property type="component" value="Unplaced"/>
</dbReference>
<dbReference type="Proteomes" id="UP000694720">
    <property type="component" value="Unplaced"/>
</dbReference>
<dbReference type="Proteomes" id="UP000694722">
    <property type="component" value="Unplaced"/>
</dbReference>
<dbReference type="Proteomes" id="UP000694723">
    <property type="component" value="Unplaced"/>
</dbReference>
<dbReference type="Proteomes" id="UP000694724">
    <property type="component" value="Unplaced"/>
</dbReference>
<dbReference type="Proteomes" id="UP000694725">
    <property type="component" value="Unplaced"/>
</dbReference>
<dbReference type="Proteomes" id="UP000694726">
    <property type="component" value="Unplaced"/>
</dbReference>
<dbReference type="Proteomes" id="UP000694727">
    <property type="component" value="Unplaced"/>
</dbReference>
<dbReference type="Proteomes" id="UP000694728">
    <property type="component" value="Unplaced"/>
</dbReference>
<dbReference type="Bgee" id="ENSSSCG00000010067">
    <property type="expression patterns" value="Expressed in granulosa cell and 46 other cell types or tissues"/>
</dbReference>
<dbReference type="GO" id="GO:0009986">
    <property type="term" value="C:cell surface"/>
    <property type="evidence" value="ECO:0007669"/>
    <property type="project" value="Ensembl"/>
</dbReference>
<dbReference type="GO" id="GO:0005829">
    <property type="term" value="C:cytosol"/>
    <property type="evidence" value="ECO:0007669"/>
    <property type="project" value="Ensembl"/>
</dbReference>
<dbReference type="GO" id="GO:0005615">
    <property type="term" value="C:extracellular space"/>
    <property type="evidence" value="ECO:0000318"/>
    <property type="project" value="GO_Central"/>
</dbReference>
<dbReference type="GO" id="GO:0005654">
    <property type="term" value="C:nucleoplasm"/>
    <property type="evidence" value="ECO:0007669"/>
    <property type="project" value="Ensembl"/>
</dbReference>
<dbReference type="GO" id="GO:0005886">
    <property type="term" value="C:plasma membrane"/>
    <property type="evidence" value="ECO:0007669"/>
    <property type="project" value="Ensembl"/>
</dbReference>
<dbReference type="GO" id="GO:0042056">
    <property type="term" value="F:chemoattractant activity"/>
    <property type="evidence" value="ECO:0007669"/>
    <property type="project" value="Ensembl"/>
</dbReference>
<dbReference type="GO" id="GO:0005125">
    <property type="term" value="F:cytokine activity"/>
    <property type="evidence" value="ECO:0000318"/>
    <property type="project" value="GO_Central"/>
</dbReference>
<dbReference type="GO" id="GO:0005126">
    <property type="term" value="F:cytokine receptor binding"/>
    <property type="evidence" value="ECO:0007669"/>
    <property type="project" value="Ensembl"/>
</dbReference>
<dbReference type="GO" id="GO:0004167">
    <property type="term" value="F:dopachrome isomerase activity"/>
    <property type="evidence" value="ECO:0000250"/>
    <property type="project" value="UniProtKB"/>
</dbReference>
<dbReference type="GO" id="GO:0042802">
    <property type="term" value="F:identical protein binding"/>
    <property type="evidence" value="ECO:0007669"/>
    <property type="project" value="Ensembl"/>
</dbReference>
<dbReference type="GO" id="GO:0050178">
    <property type="term" value="F:phenylpyruvate tautomerase activity"/>
    <property type="evidence" value="ECO:0000318"/>
    <property type="project" value="GO_Central"/>
</dbReference>
<dbReference type="GO" id="GO:0002020">
    <property type="term" value="F:protease binding"/>
    <property type="evidence" value="ECO:0007669"/>
    <property type="project" value="Ensembl"/>
</dbReference>
<dbReference type="GO" id="GO:0007166">
    <property type="term" value="P:cell surface receptor signaling pathway"/>
    <property type="evidence" value="ECO:0007669"/>
    <property type="project" value="Ensembl"/>
</dbReference>
<dbReference type="GO" id="GO:0090398">
    <property type="term" value="P:cellular senescence"/>
    <property type="evidence" value="ECO:0007669"/>
    <property type="project" value="Ensembl"/>
</dbReference>
<dbReference type="GO" id="GO:0030330">
    <property type="term" value="P:DNA damage response, signal transduction by p53 class mediator"/>
    <property type="evidence" value="ECO:0007669"/>
    <property type="project" value="Ensembl"/>
</dbReference>
<dbReference type="GO" id="GO:0006954">
    <property type="term" value="P:inflammatory response"/>
    <property type="evidence" value="ECO:0007669"/>
    <property type="project" value="UniProtKB-KW"/>
</dbReference>
<dbReference type="GO" id="GO:0045087">
    <property type="term" value="P:innate immune response"/>
    <property type="evidence" value="ECO:0007669"/>
    <property type="project" value="UniProtKB-KW"/>
</dbReference>
<dbReference type="GO" id="GO:2000773">
    <property type="term" value="P:negative regulation of cellular senescence"/>
    <property type="evidence" value="ECO:0007669"/>
    <property type="project" value="Ensembl"/>
</dbReference>
<dbReference type="GO" id="GO:0043518">
    <property type="term" value="P:negative regulation of DNA damage response, signal transduction by p53 class mediator"/>
    <property type="evidence" value="ECO:0007669"/>
    <property type="project" value="Ensembl"/>
</dbReference>
<dbReference type="GO" id="GO:0010629">
    <property type="term" value="P:negative regulation of gene expression"/>
    <property type="evidence" value="ECO:0007669"/>
    <property type="project" value="Ensembl"/>
</dbReference>
<dbReference type="GO" id="GO:1902166">
    <property type="term" value="P:negative regulation of intrinsic apoptotic signaling pathway in response to DNA damage by p53 class mediator"/>
    <property type="evidence" value="ECO:0007669"/>
    <property type="project" value="Ensembl"/>
</dbReference>
<dbReference type="GO" id="GO:0010760">
    <property type="term" value="P:negative regulation of macrophage chemotaxis"/>
    <property type="evidence" value="ECO:0007669"/>
    <property type="project" value="Ensembl"/>
</dbReference>
<dbReference type="GO" id="GO:0002906">
    <property type="term" value="P:negative regulation of mature B cell apoptotic process"/>
    <property type="evidence" value="ECO:0007669"/>
    <property type="project" value="Ensembl"/>
</dbReference>
<dbReference type="GO" id="GO:0033033">
    <property type="term" value="P:negative regulation of myeloid cell apoptotic process"/>
    <property type="evidence" value="ECO:0007669"/>
    <property type="project" value="Ensembl"/>
</dbReference>
<dbReference type="GO" id="GO:0051248">
    <property type="term" value="P:negative regulation of protein metabolic process"/>
    <property type="evidence" value="ECO:0007669"/>
    <property type="project" value="Ensembl"/>
</dbReference>
<dbReference type="GO" id="GO:0090238">
    <property type="term" value="P:positive regulation of arachidonate secretion"/>
    <property type="evidence" value="ECO:0007669"/>
    <property type="project" value="Ensembl"/>
</dbReference>
<dbReference type="GO" id="GO:0030890">
    <property type="term" value="P:positive regulation of B cell proliferation"/>
    <property type="evidence" value="ECO:0007669"/>
    <property type="project" value="Ensembl"/>
</dbReference>
<dbReference type="GO" id="GO:0141163">
    <property type="term" value="P:positive regulation of cAMP/PKA signal transduction"/>
    <property type="evidence" value="ECO:0007669"/>
    <property type="project" value="Ensembl"/>
</dbReference>
<dbReference type="GO" id="GO:2000343">
    <property type="term" value="P:positive regulation of chemokine (C-X-C motif) ligand 2 production"/>
    <property type="evidence" value="ECO:0007669"/>
    <property type="project" value="Ensembl"/>
</dbReference>
<dbReference type="GO" id="GO:0070374">
    <property type="term" value="P:positive regulation of ERK1 and ERK2 cascade"/>
    <property type="evidence" value="ECO:0007669"/>
    <property type="project" value="Ensembl"/>
</dbReference>
<dbReference type="GO" id="GO:0048146">
    <property type="term" value="P:positive regulation of fibroblast proliferation"/>
    <property type="evidence" value="ECO:0007669"/>
    <property type="project" value="Ensembl"/>
</dbReference>
<dbReference type="GO" id="GO:0031666">
    <property type="term" value="P:positive regulation of lipopolysaccharide-mediated signaling pathway"/>
    <property type="evidence" value="ECO:0007669"/>
    <property type="project" value="Ensembl"/>
</dbReference>
<dbReference type="GO" id="GO:0061081">
    <property type="term" value="P:positive regulation of myeloid leukocyte cytokine production involved in immune response"/>
    <property type="evidence" value="ECO:0007669"/>
    <property type="project" value="Ensembl"/>
</dbReference>
<dbReference type="GO" id="GO:0042327">
    <property type="term" value="P:positive regulation of phosphorylation"/>
    <property type="evidence" value="ECO:0007669"/>
    <property type="project" value="Ensembl"/>
</dbReference>
<dbReference type="GO" id="GO:0061078">
    <property type="term" value="P:positive regulation of prostaglandin secretion involved in immune response"/>
    <property type="evidence" value="ECO:0007669"/>
    <property type="project" value="Ensembl"/>
</dbReference>
<dbReference type="GO" id="GO:0032760">
    <property type="term" value="P:positive regulation of tumor necrosis factor production"/>
    <property type="evidence" value="ECO:0007669"/>
    <property type="project" value="Ensembl"/>
</dbReference>
<dbReference type="GO" id="GO:0001516">
    <property type="term" value="P:prostaglandin biosynthetic process"/>
    <property type="evidence" value="ECO:0007669"/>
    <property type="project" value="Ensembl"/>
</dbReference>
<dbReference type="GO" id="GO:0070207">
    <property type="term" value="P:protein homotrimerization"/>
    <property type="evidence" value="ECO:0007669"/>
    <property type="project" value="Ensembl"/>
</dbReference>
<dbReference type="FunFam" id="3.30.429.10:FF:000001">
    <property type="entry name" value="Macrophage migration inhibitory factor"/>
    <property type="match status" value="1"/>
</dbReference>
<dbReference type="Gene3D" id="3.30.429.10">
    <property type="entry name" value="Macrophage Migration Inhibitory Factor"/>
    <property type="match status" value="1"/>
</dbReference>
<dbReference type="InterPro" id="IPR001398">
    <property type="entry name" value="Macrophage_inhib_fac"/>
</dbReference>
<dbReference type="InterPro" id="IPR019829">
    <property type="entry name" value="Macrophage_inhib_fac_CS"/>
</dbReference>
<dbReference type="InterPro" id="IPR014347">
    <property type="entry name" value="Tautomerase/MIF_sf"/>
</dbReference>
<dbReference type="PANTHER" id="PTHR11954">
    <property type="entry name" value="D-DOPACHROME DECARBOXYLASE"/>
    <property type="match status" value="1"/>
</dbReference>
<dbReference type="PANTHER" id="PTHR11954:SF6">
    <property type="entry name" value="MACROPHAGE MIGRATION INHIBITORY FACTOR"/>
    <property type="match status" value="1"/>
</dbReference>
<dbReference type="Pfam" id="PF01187">
    <property type="entry name" value="MIF"/>
    <property type="match status" value="1"/>
</dbReference>
<dbReference type="SUPFAM" id="SSF55331">
    <property type="entry name" value="Tautomerase/MIF"/>
    <property type="match status" value="1"/>
</dbReference>
<dbReference type="PROSITE" id="PS01158">
    <property type="entry name" value="MIF"/>
    <property type="match status" value="1"/>
</dbReference>
<comment type="function">
    <text evidence="1">Pro-inflammatory cytokine involved in the innate immune response to bacterial pathogens. The expression of MIF at sites of inflammation suggests a role as mediator in regulating the function of macrophages in host defense. Counteracts the anti-inflammatory activity of glucocorticoids. Has phenylpyruvate tautomerase and dopachrome tautomerase activity (in vitro), but the physiological substrate is not known. It is not clear whether the tautomerase activity has any physiological relevance, and whether it is important for cytokine activity.</text>
</comment>
<comment type="catalytic activity">
    <reaction evidence="1">
        <text>3-phenylpyruvate = enol-phenylpyruvate</text>
        <dbReference type="Rhea" id="RHEA:17097"/>
        <dbReference type="ChEBI" id="CHEBI:16815"/>
        <dbReference type="ChEBI" id="CHEBI:18005"/>
        <dbReference type="EC" id="5.3.2.1"/>
    </reaction>
</comment>
<comment type="catalytic activity">
    <reaction evidence="1">
        <text>L-dopachrome = 5,6-dihydroxyindole-2-carboxylate</text>
        <dbReference type="Rhea" id="RHEA:13041"/>
        <dbReference type="ChEBI" id="CHEBI:16875"/>
        <dbReference type="ChEBI" id="CHEBI:57509"/>
        <dbReference type="EC" id="5.3.3.12"/>
    </reaction>
</comment>
<comment type="subunit">
    <text evidence="1 2">Homotrimer (By similarity). Interacts with CXCR2 extracellular domain (By similarity). Interacts with the CD74 extracellular domain, USO1, COPS5 and BNIPL (By similarity).</text>
</comment>
<comment type="subcellular location">
    <subcellularLocation>
        <location evidence="1">Secreted</location>
    </subcellularLocation>
    <subcellularLocation>
        <location evidence="1">Cytoplasm</location>
    </subcellularLocation>
    <text evidence="1">Does not have a cleavable signal sequence and is secreted via a specialized, non-classical pathway. Secreted by macrophages upon stimulation by bacterial lipopolysaccharide (LPS), or by M.tuberculosis antigens.</text>
</comment>
<comment type="similarity">
    <text evidence="4">Belongs to the MIF family.</text>
</comment>
<protein>
    <recommendedName>
        <fullName>Macrophage migration inhibitory factor</fullName>
        <shortName>MIF</shortName>
        <ecNumber evidence="1">5.3.2.1</ecNumber>
    </recommendedName>
    <alternativeName>
        <fullName>Glycosylation-inhibiting factor</fullName>
        <shortName>GIF</shortName>
    </alternativeName>
    <alternativeName>
        <fullName>L-dopachrome isomerase</fullName>
    </alternativeName>
    <alternativeName>
        <fullName>L-dopachrome tautomerase</fullName>
        <ecNumber evidence="1">5.3.3.12</ecNumber>
    </alternativeName>
    <alternativeName>
        <fullName>Phenylpyruvate tautomerase</fullName>
    </alternativeName>
</protein>
<reference key="1">
    <citation type="submission" date="2006-09" db="EMBL/GenBank/DDBJ databases">
        <title>Cloning and expression of porcine macrophage migration inhibitory factor (MIF).</title>
        <authorList>
            <person name="Chen Y."/>
            <person name="Chen X."/>
            <person name="Long Q."/>
            <person name="Yang Z."/>
        </authorList>
    </citation>
    <scope>NUCLEOTIDE SEQUENCE [MRNA]</scope>
</reference>
<reference key="2">
    <citation type="journal article" date="1998" name="Domest. Anim. Endocrinol.">
        <title>Pituitary function in the acute phase response in domestic farm animals: cytokines, prostaglandins, and secretion of ACTH.</title>
        <authorList>
            <person name="Abraham E.J."/>
            <person name="Morris-Hardeman J.N."/>
            <person name="Swenson L.M."/>
            <person name="Knoppel E.L."/>
            <person name="Ramanathan B."/>
            <person name="Wright K.J."/>
            <person name="Grieger D.M."/>
            <person name="Minton J.E."/>
        </authorList>
    </citation>
    <scope>NUCLEOTIDE SEQUENCE [MRNA] OF 1-111</scope>
</reference>
<reference key="3">
    <citation type="submission" date="1997-03" db="UniProtKB">
        <authorList>
            <person name="Riviere S."/>
            <person name="Bouet F."/>
            <person name="Menez A."/>
            <person name="Galat A."/>
        </authorList>
    </citation>
    <scope>PROTEIN SEQUENCE OF 2-21</scope>
</reference>
<name>MIF_PIG</name>
<accession>P80928</accession>
<accession>Q069I4</accession>
<accession>Q9TUM7</accession>
<feature type="initiator methionine" description="Removed" evidence="3">
    <location>
        <position position="1"/>
    </location>
</feature>
<feature type="chain" id="PRO_0000158067" description="Macrophage migration inhibitory factor">
    <location>
        <begin position="2"/>
        <end position="115"/>
    </location>
</feature>
<feature type="active site" description="Proton acceptor; via imino nitrogen" evidence="2">
    <location>
        <position position="2"/>
    </location>
</feature>
<feature type="binding site" evidence="1">
    <location>
        <position position="33"/>
    </location>
    <ligand>
        <name>substrate</name>
    </ligand>
</feature>
<feature type="binding site" evidence="1">
    <location>
        <position position="65"/>
    </location>
    <ligand>
        <name>substrate</name>
    </ligand>
</feature>
<feature type="binding site" evidence="1">
    <location>
        <position position="98"/>
    </location>
    <ligand>
        <name>substrate</name>
    </ligand>
</feature>
<feature type="modified residue" description="N6-acetyllysine; alternate" evidence="1">
    <location>
        <position position="78"/>
    </location>
</feature>
<feature type="modified residue" description="N6-succinyllysine; alternate" evidence="2">
    <location>
        <position position="78"/>
    </location>
</feature>
<keyword id="KW-0007">Acetylation</keyword>
<keyword id="KW-0202">Cytokine</keyword>
<keyword id="KW-0963">Cytoplasm</keyword>
<keyword id="KW-0903">Direct protein sequencing</keyword>
<keyword id="KW-0391">Immunity</keyword>
<keyword id="KW-0395">Inflammatory response</keyword>
<keyword id="KW-0399">Innate immunity</keyword>
<keyword id="KW-0413">Isomerase</keyword>
<keyword id="KW-1185">Reference proteome</keyword>
<keyword id="KW-0964">Secreted</keyword>
<proteinExistence type="evidence at protein level"/>
<organism>
    <name type="scientific">Sus scrofa</name>
    <name type="common">Pig</name>
    <dbReference type="NCBI Taxonomy" id="9823"/>
    <lineage>
        <taxon>Eukaryota</taxon>
        <taxon>Metazoa</taxon>
        <taxon>Chordata</taxon>
        <taxon>Craniata</taxon>
        <taxon>Vertebrata</taxon>
        <taxon>Euteleostomi</taxon>
        <taxon>Mammalia</taxon>
        <taxon>Eutheria</taxon>
        <taxon>Laurasiatheria</taxon>
        <taxon>Artiodactyla</taxon>
        <taxon>Suina</taxon>
        <taxon>Suidae</taxon>
        <taxon>Sus</taxon>
    </lineage>
</organism>